<protein>
    <recommendedName>
        <fullName evidence="1">Protein translocase subunit SecE</fullName>
    </recommendedName>
    <alternativeName>
        <fullName evidence="1">Protein transport protein Sec61 gamma subunit homolog</fullName>
    </alternativeName>
</protein>
<feature type="chain" id="PRO_0000273137" description="Protein translocase subunit SecE">
    <location>
        <begin position="1"/>
        <end position="71"/>
    </location>
</feature>
<feature type="transmembrane region" description="Helical" evidence="1">
    <location>
        <begin position="43"/>
        <end position="63"/>
    </location>
</feature>
<proteinExistence type="inferred from homology"/>
<dbReference type="EMBL" id="CP000099">
    <property type="protein sequence ID" value="AAZ69597.1"/>
    <property type="molecule type" value="Genomic_DNA"/>
</dbReference>
<dbReference type="SMR" id="Q46EU5"/>
<dbReference type="STRING" id="269797.Mbar_A0617"/>
<dbReference type="PaxDb" id="269797-Mbar_A0617"/>
<dbReference type="KEGG" id="mba:Mbar_A0617"/>
<dbReference type="eggNOG" id="arCOG02204">
    <property type="taxonomic scope" value="Archaea"/>
</dbReference>
<dbReference type="HOGENOM" id="CLU_191921_2_1_2"/>
<dbReference type="OrthoDB" id="52835at2157"/>
<dbReference type="GO" id="GO:0005886">
    <property type="term" value="C:plasma membrane"/>
    <property type="evidence" value="ECO:0007669"/>
    <property type="project" value="UniProtKB-SubCell"/>
</dbReference>
<dbReference type="GO" id="GO:0008320">
    <property type="term" value="F:protein transmembrane transporter activity"/>
    <property type="evidence" value="ECO:0007669"/>
    <property type="project" value="UniProtKB-UniRule"/>
</dbReference>
<dbReference type="GO" id="GO:0065002">
    <property type="term" value="P:intracellular protein transmembrane transport"/>
    <property type="evidence" value="ECO:0007669"/>
    <property type="project" value="UniProtKB-UniRule"/>
</dbReference>
<dbReference type="GO" id="GO:0009306">
    <property type="term" value="P:protein secretion"/>
    <property type="evidence" value="ECO:0007669"/>
    <property type="project" value="UniProtKB-UniRule"/>
</dbReference>
<dbReference type="GO" id="GO:0006605">
    <property type="term" value="P:protein targeting"/>
    <property type="evidence" value="ECO:0007669"/>
    <property type="project" value="UniProtKB-UniRule"/>
</dbReference>
<dbReference type="Gene3D" id="1.20.5.820">
    <property type="entry name" value="Preprotein translocase SecE subunit"/>
    <property type="match status" value="1"/>
</dbReference>
<dbReference type="HAMAP" id="MF_00422">
    <property type="entry name" value="SecE"/>
    <property type="match status" value="1"/>
</dbReference>
<dbReference type="InterPro" id="IPR023391">
    <property type="entry name" value="Prot_translocase_SecE_dom_sf"/>
</dbReference>
<dbReference type="InterPro" id="IPR008158">
    <property type="entry name" value="Translocase_Sec61-g"/>
</dbReference>
<dbReference type="InterPro" id="IPR001901">
    <property type="entry name" value="Translocase_SecE/Sec61-g"/>
</dbReference>
<dbReference type="NCBIfam" id="NF006908">
    <property type="entry name" value="PRK09400.1-3"/>
    <property type="match status" value="1"/>
</dbReference>
<dbReference type="NCBIfam" id="TIGR00327">
    <property type="entry name" value="secE_euk_arch"/>
    <property type="match status" value="1"/>
</dbReference>
<dbReference type="Pfam" id="PF00584">
    <property type="entry name" value="SecE"/>
    <property type="match status" value="1"/>
</dbReference>
<dbReference type="SUPFAM" id="SSF103456">
    <property type="entry name" value="Preprotein translocase SecE subunit"/>
    <property type="match status" value="1"/>
</dbReference>
<sequence length="71" mass="7806">MVESTFEPKITAESVGQVIRAHLRVLKLTRKPSREEFLTIAKVAGVGILAVGAIGFIIYVLLTMLPQWVAQ</sequence>
<organism>
    <name type="scientific">Methanosarcina barkeri (strain Fusaro / DSM 804)</name>
    <dbReference type="NCBI Taxonomy" id="269797"/>
    <lineage>
        <taxon>Archaea</taxon>
        <taxon>Methanobacteriati</taxon>
        <taxon>Methanobacteriota</taxon>
        <taxon>Stenosarchaea group</taxon>
        <taxon>Methanomicrobia</taxon>
        <taxon>Methanosarcinales</taxon>
        <taxon>Methanosarcinaceae</taxon>
        <taxon>Methanosarcina</taxon>
    </lineage>
</organism>
<reference key="1">
    <citation type="journal article" date="2006" name="J. Bacteriol.">
        <title>The Methanosarcina barkeri genome: comparative analysis with Methanosarcina acetivorans and Methanosarcina mazei reveals extensive rearrangement within methanosarcinal genomes.</title>
        <authorList>
            <person name="Maeder D.L."/>
            <person name="Anderson I."/>
            <person name="Brettin T.S."/>
            <person name="Bruce D.C."/>
            <person name="Gilna P."/>
            <person name="Han C.S."/>
            <person name="Lapidus A."/>
            <person name="Metcalf W.W."/>
            <person name="Saunders E."/>
            <person name="Tapia R."/>
            <person name="Sowers K.R."/>
        </authorList>
    </citation>
    <scope>NUCLEOTIDE SEQUENCE [LARGE SCALE GENOMIC DNA]</scope>
    <source>
        <strain>Fusaro / DSM 804</strain>
    </source>
</reference>
<evidence type="ECO:0000255" key="1">
    <source>
        <dbReference type="HAMAP-Rule" id="MF_00422"/>
    </source>
</evidence>
<comment type="function">
    <text evidence="1">Essential subunit of the Sec protein translocation channel SecYEG. Clamps together the 2 halves of SecY. May contact the channel plug during translocation.</text>
</comment>
<comment type="subunit">
    <text evidence="1">Component of the Sec protein translocase complex. Heterotrimer consisting of SecY (alpha), SecG (beta) and SecE (gamma) subunits. The heterotrimers can form oligomers, although 1 heterotrimer is thought to be able to translocate proteins. Interacts with the ribosome. May interact with SecDF, and other proteins may be involved.</text>
</comment>
<comment type="subcellular location">
    <subcellularLocation>
        <location evidence="1">Cell membrane</location>
        <topology evidence="1">Single-pass membrane protein</topology>
    </subcellularLocation>
</comment>
<comment type="similarity">
    <text evidence="1">Belongs to the SecE/SEC61-gamma family.</text>
</comment>
<keyword id="KW-1003">Cell membrane</keyword>
<keyword id="KW-0472">Membrane</keyword>
<keyword id="KW-0653">Protein transport</keyword>
<keyword id="KW-0811">Translocation</keyword>
<keyword id="KW-0812">Transmembrane</keyword>
<keyword id="KW-1133">Transmembrane helix</keyword>
<keyword id="KW-0813">Transport</keyword>
<accession>Q46EU5</accession>
<gene>
    <name evidence="1" type="primary">secE</name>
    <name type="ordered locus">Mbar_A0617</name>
</gene>
<name>SECE_METBF</name>